<evidence type="ECO:0000250" key="1"/>
<evidence type="ECO:0000250" key="2">
    <source>
        <dbReference type="UniProtKB" id="P80386"/>
    </source>
</evidence>
<evidence type="ECO:0000250" key="3">
    <source>
        <dbReference type="UniProtKB" id="Q9R078"/>
    </source>
</evidence>
<evidence type="ECO:0000250" key="4">
    <source>
        <dbReference type="UniProtKB" id="Q9Y478"/>
    </source>
</evidence>
<evidence type="ECO:0000305" key="5"/>
<organism>
    <name type="scientific">Sus scrofa</name>
    <name type="common">Pig</name>
    <dbReference type="NCBI Taxonomy" id="9823"/>
    <lineage>
        <taxon>Eukaryota</taxon>
        <taxon>Metazoa</taxon>
        <taxon>Chordata</taxon>
        <taxon>Craniata</taxon>
        <taxon>Vertebrata</taxon>
        <taxon>Euteleostomi</taxon>
        <taxon>Mammalia</taxon>
        <taxon>Eutheria</taxon>
        <taxon>Laurasiatheria</taxon>
        <taxon>Artiodactyla</taxon>
        <taxon>Suina</taxon>
        <taxon>Suidae</taxon>
        <taxon>Sus</taxon>
    </lineage>
</organism>
<proteinExistence type="evidence at protein level"/>
<accession>P80387</accession>
<dbReference type="SMR" id="P80387"/>
<dbReference type="STRING" id="9823.ENSSSCP00000010503"/>
<dbReference type="CAZy" id="CBM48">
    <property type="family name" value="Carbohydrate-Binding Module Family 48"/>
</dbReference>
<dbReference type="PaxDb" id="9823-ENSSSCP00000010503"/>
<dbReference type="eggNOG" id="KOG1616">
    <property type="taxonomic scope" value="Eukaryota"/>
</dbReference>
<dbReference type="HOGENOM" id="CLU_070949_2_0_1"/>
<dbReference type="InParanoid" id="P80387"/>
<dbReference type="Proteomes" id="UP000008227">
    <property type="component" value="Unplaced"/>
</dbReference>
<dbReference type="Proteomes" id="UP000314985">
    <property type="component" value="Unplaced"/>
</dbReference>
<dbReference type="Proteomes" id="UP000694570">
    <property type="component" value="Unplaced"/>
</dbReference>
<dbReference type="Proteomes" id="UP000694571">
    <property type="component" value="Unplaced"/>
</dbReference>
<dbReference type="Proteomes" id="UP000694720">
    <property type="component" value="Unplaced"/>
</dbReference>
<dbReference type="Proteomes" id="UP000694722">
    <property type="component" value="Unplaced"/>
</dbReference>
<dbReference type="Proteomes" id="UP000694723">
    <property type="component" value="Unplaced"/>
</dbReference>
<dbReference type="Proteomes" id="UP000694724">
    <property type="component" value="Unplaced"/>
</dbReference>
<dbReference type="Proteomes" id="UP000694725">
    <property type="component" value="Unplaced"/>
</dbReference>
<dbReference type="Proteomes" id="UP000694726">
    <property type="component" value="Unplaced"/>
</dbReference>
<dbReference type="Proteomes" id="UP000694727">
    <property type="component" value="Unplaced"/>
</dbReference>
<dbReference type="Proteomes" id="UP000694728">
    <property type="component" value="Unplaced"/>
</dbReference>
<dbReference type="GO" id="GO:0006633">
    <property type="term" value="P:fatty acid biosynthetic process"/>
    <property type="evidence" value="ECO:0007669"/>
    <property type="project" value="UniProtKB-KW"/>
</dbReference>
<dbReference type="CDD" id="cd02859">
    <property type="entry name" value="E_set_AMPKbeta_like_N"/>
    <property type="match status" value="1"/>
</dbReference>
<dbReference type="FunFam" id="2.60.40.10:FF:000139">
    <property type="entry name" value="Protein kinase AMP-activated non-catalytic subunit beta 1"/>
    <property type="match status" value="1"/>
</dbReference>
<dbReference type="Gene3D" id="2.60.40.10">
    <property type="entry name" value="Immunoglobulins"/>
    <property type="match status" value="1"/>
</dbReference>
<dbReference type="InterPro" id="IPR032640">
    <property type="entry name" value="AMPK1_CBM"/>
</dbReference>
<dbReference type="InterPro" id="IPR050827">
    <property type="entry name" value="CRP1_MDG1_kinase"/>
</dbReference>
<dbReference type="InterPro" id="IPR013783">
    <property type="entry name" value="Ig-like_fold"/>
</dbReference>
<dbReference type="InterPro" id="IPR014756">
    <property type="entry name" value="Ig_E-set"/>
</dbReference>
<dbReference type="PANTHER" id="PTHR10343">
    <property type="entry name" value="5'-AMP-ACTIVATED PROTEIN KINASE , BETA SUBUNIT"/>
    <property type="match status" value="1"/>
</dbReference>
<dbReference type="PANTHER" id="PTHR10343:SF84">
    <property type="entry name" value="5'-AMP-ACTIVATED PROTEIN KINASE SUBUNIT BETA-1"/>
    <property type="match status" value="1"/>
</dbReference>
<dbReference type="Pfam" id="PF16561">
    <property type="entry name" value="AMPK1_CBM"/>
    <property type="match status" value="1"/>
</dbReference>
<dbReference type="SUPFAM" id="SSF81296">
    <property type="entry name" value="E set domains"/>
    <property type="match status" value="1"/>
</dbReference>
<feature type="chain" id="PRO_0000204365" description="5'-AMP-activated protein kinase subunit beta-1">
    <location>
        <begin position="1" status="less than"/>
        <end position="122" status="greater than"/>
    </location>
</feature>
<feature type="region of interest" description="Glycogen-binding domain" evidence="1">
    <location>
        <begin position="33"/>
        <end position="122" status="greater than"/>
    </location>
</feature>
<feature type="modified residue" description="Phosphoserine" evidence="4">
    <location>
        <position position="5"/>
    </location>
</feature>
<feature type="modified residue" description="Phosphoserine" evidence="4">
    <location>
        <position position="61"/>
    </location>
</feature>
<feature type="modified residue" description="Phosphoserine" evidence="2">
    <location>
        <position position="66"/>
    </location>
</feature>
<feature type="modified residue" description="Phosphoserine" evidence="3">
    <location>
        <position position="73"/>
    </location>
</feature>
<feature type="modified residue" description="Phosphothreonine" evidence="4">
    <location>
        <position position="113"/>
    </location>
</feature>
<feature type="sequence conflict" description="In Ref. 1; AA sequence." evidence="5" ref="1">
    <original>W</original>
    <variation>S</variation>
    <location>
        <position position="65"/>
    </location>
</feature>
<feature type="non-terminal residue">
    <location>
        <position position="1"/>
    </location>
</feature>
<feature type="non-terminal residue">
    <location>
        <position position="122"/>
    </location>
</feature>
<gene>
    <name type="primary">PRKAB1</name>
</gene>
<protein>
    <recommendedName>
        <fullName>5'-AMP-activated protein kinase subunit beta-1</fullName>
        <shortName>AMPK subunit beta-1</shortName>
        <shortName>AMPKb</shortName>
    </recommendedName>
    <alternativeName>
        <fullName>5'-AMP-activated protein kinase 40 kDa subunit</fullName>
    </alternativeName>
</protein>
<sequence>ILMDSPEDADLYHSEEIKAPEKEEFLAWQHDLEVNDKASAQARPTVFRWTGGGKEVYLSGSFNNWSKLPLTRSHNNFVAILDLPEGEHQYKFLVDGQWTHDPSEPVVTSQLGTVNNIIQVKK</sequence>
<reference key="1">
    <citation type="journal article" date="1994" name="J. Biol. Chem.">
        <title>Mammalian 5'-AMP-activated protein kinase non-catalytic subunits are homologs of proteins that interact with yeast Snf1 protein kinase.</title>
        <authorList>
            <person name="Stapleton D."/>
            <person name="Gao G."/>
            <person name="Michell B.J."/>
            <person name="Widmer J."/>
            <person name="Mitchelhill K.I."/>
            <person name="Teh T."/>
            <person name="House C.M."/>
            <person name="Witters L.A."/>
            <person name="Kemp B.E."/>
        </authorList>
    </citation>
    <scope>NUCLEOTIDE SEQUENCE OF 15-120</scope>
    <scope>PROTEIN SEQUENCE OF 1-21; 23-86 AND 92-122</scope>
    <source>
        <tissue>Liver</tissue>
    </source>
</reference>
<name>AAKB1_PIG</name>
<comment type="function">
    <text evidence="1">Non-catalytic subunit of AMP-activated protein kinase (AMPK), an energy sensor protein kinase that plays a key role in regulating cellular energy metabolism. In response to reduction of intracellular ATP levels, AMPK activates energy-producing pathways and inhibits energy-consuming processes: inhibits protein, carbohydrate and lipid biosynthesis, as well as cell growth and proliferation. AMPK acts via direct phosphorylation of metabolic enzymes, and by longer-term effects via phosphorylation of transcription regulators. Also acts as a regulator of cellular polarity by remodeling the actin cytoskeleton; probably by indirectly activating myosin. Beta non-catalytic subunit acts as a scaffold on which the AMPK complex assembles, via its C-terminus that bridges alpha (PRKAA1 or PRKAA2) and gamma subunits (PRKAG1, PRKAG2 or PRKAG3) (By similarity).</text>
</comment>
<comment type="subunit">
    <text evidence="1">AMPK is a heterotrimer of an alpha catalytic subunit (PRKAA1 or PRKAA2), a beta (PRKAB1 or PRKAB2) and a gamma non-catalytic subunits (PRKAG1, PRKAG2 or PRKAG3). Interacts with FNIP1 and FNIP2 (By similarity).</text>
</comment>
<comment type="domain">
    <text evidence="1">The glycogen-binding domain may target AMPK to glycogen so that other factors like glycogen-bound debranching enzyme or protein phosphatases can directly affect AMPK activity.</text>
</comment>
<comment type="PTM">
    <text evidence="1">Phosphorylated when associated with the catalytic subunit (PRKAA1 or PRKAA2). Phosphorylated by ULK1; leading to negatively regulate AMPK activity and suggesting the existence of a regulatory feedback loop between ULK1 and AMPK (By similarity).</text>
</comment>
<comment type="similarity">
    <text evidence="5">Belongs to the 5'-AMP-activated protein kinase beta subunit family.</text>
</comment>
<keyword id="KW-0903">Direct protein sequencing</keyword>
<keyword id="KW-0275">Fatty acid biosynthesis</keyword>
<keyword id="KW-0276">Fatty acid metabolism</keyword>
<keyword id="KW-0444">Lipid biosynthesis</keyword>
<keyword id="KW-0443">Lipid metabolism</keyword>
<keyword id="KW-0597">Phosphoprotein</keyword>
<keyword id="KW-1185">Reference proteome</keyword>